<comment type="function">
    <text evidence="1">IF-3 binds to the 30S ribosomal subunit and shifts the equilibrium between 70S ribosomes and their 50S and 30S subunits in favor of the free subunits, thus enhancing the availability of 30S subunits on which protein synthesis initiation begins.</text>
</comment>
<comment type="subunit">
    <text evidence="1">Monomer.</text>
</comment>
<comment type="subcellular location">
    <subcellularLocation>
        <location evidence="1">Cytoplasm</location>
    </subcellularLocation>
</comment>
<comment type="similarity">
    <text evidence="1">Belongs to the IF-3 family.</text>
</comment>
<dbReference type="EMBL" id="CP000148">
    <property type="protein sequence ID" value="ABB31646.2"/>
    <property type="molecule type" value="Genomic_DNA"/>
</dbReference>
<dbReference type="RefSeq" id="WP_011365824.1">
    <property type="nucleotide sequence ID" value="NC_007517.1"/>
</dbReference>
<dbReference type="SMR" id="Q39VS8"/>
<dbReference type="STRING" id="269799.Gmet_1412"/>
<dbReference type="KEGG" id="gme:Gmet_1412"/>
<dbReference type="eggNOG" id="COG0290">
    <property type="taxonomic scope" value="Bacteria"/>
</dbReference>
<dbReference type="HOGENOM" id="CLU_054919_3_2_7"/>
<dbReference type="Proteomes" id="UP000007073">
    <property type="component" value="Chromosome"/>
</dbReference>
<dbReference type="GO" id="GO:0005829">
    <property type="term" value="C:cytosol"/>
    <property type="evidence" value="ECO:0007669"/>
    <property type="project" value="TreeGrafter"/>
</dbReference>
<dbReference type="GO" id="GO:0016020">
    <property type="term" value="C:membrane"/>
    <property type="evidence" value="ECO:0007669"/>
    <property type="project" value="TreeGrafter"/>
</dbReference>
<dbReference type="GO" id="GO:0043022">
    <property type="term" value="F:ribosome binding"/>
    <property type="evidence" value="ECO:0007669"/>
    <property type="project" value="TreeGrafter"/>
</dbReference>
<dbReference type="GO" id="GO:0003743">
    <property type="term" value="F:translation initiation factor activity"/>
    <property type="evidence" value="ECO:0007669"/>
    <property type="project" value="UniProtKB-UniRule"/>
</dbReference>
<dbReference type="GO" id="GO:0032790">
    <property type="term" value="P:ribosome disassembly"/>
    <property type="evidence" value="ECO:0007669"/>
    <property type="project" value="TreeGrafter"/>
</dbReference>
<dbReference type="FunFam" id="3.10.20.80:FF:000001">
    <property type="entry name" value="Translation initiation factor IF-3"/>
    <property type="match status" value="1"/>
</dbReference>
<dbReference type="FunFam" id="3.30.110.10:FF:000001">
    <property type="entry name" value="Translation initiation factor IF-3"/>
    <property type="match status" value="1"/>
</dbReference>
<dbReference type="Gene3D" id="3.30.110.10">
    <property type="entry name" value="Translation initiation factor 3 (IF-3), C-terminal domain"/>
    <property type="match status" value="1"/>
</dbReference>
<dbReference type="Gene3D" id="3.10.20.80">
    <property type="entry name" value="Translation initiation factor 3 (IF-3), N-terminal domain"/>
    <property type="match status" value="1"/>
</dbReference>
<dbReference type="HAMAP" id="MF_00080">
    <property type="entry name" value="IF_3"/>
    <property type="match status" value="1"/>
</dbReference>
<dbReference type="InterPro" id="IPR036788">
    <property type="entry name" value="T_IF-3_C_sf"/>
</dbReference>
<dbReference type="InterPro" id="IPR036787">
    <property type="entry name" value="T_IF-3_N_sf"/>
</dbReference>
<dbReference type="InterPro" id="IPR019813">
    <property type="entry name" value="Translation_initiation_fac3_CS"/>
</dbReference>
<dbReference type="InterPro" id="IPR001288">
    <property type="entry name" value="Translation_initiation_fac_3"/>
</dbReference>
<dbReference type="InterPro" id="IPR019815">
    <property type="entry name" value="Translation_initiation_fac_3_C"/>
</dbReference>
<dbReference type="InterPro" id="IPR019814">
    <property type="entry name" value="Translation_initiation_fac_3_N"/>
</dbReference>
<dbReference type="NCBIfam" id="TIGR00168">
    <property type="entry name" value="infC"/>
    <property type="match status" value="1"/>
</dbReference>
<dbReference type="PANTHER" id="PTHR10938">
    <property type="entry name" value="TRANSLATION INITIATION FACTOR IF-3"/>
    <property type="match status" value="1"/>
</dbReference>
<dbReference type="PANTHER" id="PTHR10938:SF0">
    <property type="entry name" value="TRANSLATION INITIATION FACTOR IF-3, MITOCHONDRIAL"/>
    <property type="match status" value="1"/>
</dbReference>
<dbReference type="Pfam" id="PF00707">
    <property type="entry name" value="IF3_C"/>
    <property type="match status" value="1"/>
</dbReference>
<dbReference type="Pfam" id="PF05198">
    <property type="entry name" value="IF3_N"/>
    <property type="match status" value="1"/>
</dbReference>
<dbReference type="SUPFAM" id="SSF55200">
    <property type="entry name" value="Translation initiation factor IF3, C-terminal domain"/>
    <property type="match status" value="1"/>
</dbReference>
<dbReference type="SUPFAM" id="SSF54364">
    <property type="entry name" value="Translation initiation factor IF3, N-terminal domain"/>
    <property type="match status" value="1"/>
</dbReference>
<dbReference type="PROSITE" id="PS00938">
    <property type="entry name" value="IF3"/>
    <property type="match status" value="1"/>
</dbReference>
<accession>Q39VS8</accession>
<reference key="1">
    <citation type="journal article" date="2009" name="BMC Microbiol.">
        <title>The genome sequence of Geobacter metallireducens: features of metabolism, physiology and regulation common and dissimilar to Geobacter sulfurreducens.</title>
        <authorList>
            <person name="Aklujkar M."/>
            <person name="Krushkal J."/>
            <person name="DiBartolo G."/>
            <person name="Lapidus A."/>
            <person name="Land M.L."/>
            <person name="Lovley D.R."/>
        </authorList>
    </citation>
    <scope>NUCLEOTIDE SEQUENCE [LARGE SCALE GENOMIC DNA]</scope>
    <source>
        <strain>ATCC 53774 / DSM 7210 / GS-15</strain>
    </source>
</reference>
<feature type="chain" id="PRO_0000250214" description="Translation initiation factor IF-3">
    <location>
        <begin position="1"/>
        <end position="172"/>
    </location>
</feature>
<sequence>MAKPTVNVNQAIRAREIRVVGANSEQLGIMPLNEALALAESQQLDLVEVSPTAVPPVCRIMDYGKFKYQQSKKLQEAKKKQSHVVVKEVKLRPKTDEHDLQFKIKHVRRFIEEGNKAKVTLVFRGREITHMEFGVRALERVASEIEDIAVIEMKPKMEGRSMFMIVAPKVKK</sequence>
<protein>
    <recommendedName>
        <fullName evidence="1">Translation initiation factor IF-3</fullName>
    </recommendedName>
</protein>
<gene>
    <name evidence="1" type="primary">infC</name>
    <name type="ordered locus">Gmet_1412</name>
</gene>
<proteinExistence type="inferred from homology"/>
<evidence type="ECO:0000255" key="1">
    <source>
        <dbReference type="HAMAP-Rule" id="MF_00080"/>
    </source>
</evidence>
<name>IF3_GEOMG</name>
<organism>
    <name type="scientific">Geobacter metallireducens (strain ATCC 53774 / DSM 7210 / GS-15)</name>
    <dbReference type="NCBI Taxonomy" id="269799"/>
    <lineage>
        <taxon>Bacteria</taxon>
        <taxon>Pseudomonadati</taxon>
        <taxon>Thermodesulfobacteriota</taxon>
        <taxon>Desulfuromonadia</taxon>
        <taxon>Geobacterales</taxon>
        <taxon>Geobacteraceae</taxon>
        <taxon>Geobacter</taxon>
    </lineage>
</organism>
<keyword id="KW-0963">Cytoplasm</keyword>
<keyword id="KW-0396">Initiation factor</keyword>
<keyword id="KW-0648">Protein biosynthesis</keyword>
<keyword id="KW-1185">Reference proteome</keyword>